<organism>
    <name type="scientific">Clostridium tetani (strain Massachusetts / E88)</name>
    <dbReference type="NCBI Taxonomy" id="212717"/>
    <lineage>
        <taxon>Bacteria</taxon>
        <taxon>Bacillati</taxon>
        <taxon>Bacillota</taxon>
        <taxon>Clostridia</taxon>
        <taxon>Eubacteriales</taxon>
        <taxon>Clostridiaceae</taxon>
        <taxon>Clostridium</taxon>
    </lineage>
</organism>
<dbReference type="EC" id="4.3.1.3" evidence="1"/>
<dbReference type="EMBL" id="AE015927">
    <property type="protein sequence ID" value="AAO36794.1"/>
    <property type="molecule type" value="Genomic_DNA"/>
</dbReference>
<dbReference type="RefSeq" id="WP_011100455.1">
    <property type="nucleotide sequence ID" value="NC_004557.1"/>
</dbReference>
<dbReference type="SMR" id="Q891Q1"/>
<dbReference type="STRING" id="212717.CTC_02318"/>
<dbReference type="GeneID" id="24254755"/>
<dbReference type="KEGG" id="ctc:CTC_02318"/>
<dbReference type="HOGENOM" id="CLU_014801_4_0_9"/>
<dbReference type="OrthoDB" id="9806955at2"/>
<dbReference type="UniPathway" id="UPA00379">
    <property type="reaction ID" value="UER00549"/>
</dbReference>
<dbReference type="Proteomes" id="UP000001412">
    <property type="component" value="Chromosome"/>
</dbReference>
<dbReference type="GO" id="GO:0005737">
    <property type="term" value="C:cytoplasm"/>
    <property type="evidence" value="ECO:0007669"/>
    <property type="project" value="UniProtKB-SubCell"/>
</dbReference>
<dbReference type="GO" id="GO:0004397">
    <property type="term" value="F:histidine ammonia-lyase activity"/>
    <property type="evidence" value="ECO:0007669"/>
    <property type="project" value="UniProtKB-UniRule"/>
</dbReference>
<dbReference type="GO" id="GO:0019556">
    <property type="term" value="P:L-histidine catabolic process to glutamate and formamide"/>
    <property type="evidence" value="ECO:0007669"/>
    <property type="project" value="UniProtKB-UniPathway"/>
</dbReference>
<dbReference type="GO" id="GO:0019557">
    <property type="term" value="P:L-histidine catabolic process to glutamate and formate"/>
    <property type="evidence" value="ECO:0007669"/>
    <property type="project" value="UniProtKB-UniPathway"/>
</dbReference>
<dbReference type="CDD" id="cd00332">
    <property type="entry name" value="PAL-HAL"/>
    <property type="match status" value="1"/>
</dbReference>
<dbReference type="FunFam" id="1.10.275.10:FF:000005">
    <property type="entry name" value="Histidine ammonia-lyase"/>
    <property type="match status" value="1"/>
</dbReference>
<dbReference type="FunFam" id="1.20.200.10:FF:000003">
    <property type="entry name" value="Histidine ammonia-lyase"/>
    <property type="match status" value="1"/>
</dbReference>
<dbReference type="Gene3D" id="1.20.200.10">
    <property type="entry name" value="Fumarase/aspartase (Central domain)"/>
    <property type="match status" value="1"/>
</dbReference>
<dbReference type="Gene3D" id="1.10.275.10">
    <property type="entry name" value="Fumarase/aspartase (N-terminal domain)"/>
    <property type="match status" value="1"/>
</dbReference>
<dbReference type="HAMAP" id="MF_00229">
    <property type="entry name" value="His_ammonia_lyase"/>
    <property type="match status" value="1"/>
</dbReference>
<dbReference type="InterPro" id="IPR001106">
    <property type="entry name" value="Aromatic_Lyase"/>
</dbReference>
<dbReference type="InterPro" id="IPR024083">
    <property type="entry name" value="Fumarase/histidase_N"/>
</dbReference>
<dbReference type="InterPro" id="IPR005921">
    <property type="entry name" value="HutH"/>
</dbReference>
<dbReference type="InterPro" id="IPR008948">
    <property type="entry name" value="L-Aspartase-like"/>
</dbReference>
<dbReference type="InterPro" id="IPR022313">
    <property type="entry name" value="Phe/His_NH3-lyase_AS"/>
</dbReference>
<dbReference type="NCBIfam" id="TIGR01225">
    <property type="entry name" value="hutH"/>
    <property type="match status" value="1"/>
</dbReference>
<dbReference type="NCBIfam" id="NF006871">
    <property type="entry name" value="PRK09367.1"/>
    <property type="match status" value="1"/>
</dbReference>
<dbReference type="PANTHER" id="PTHR10362">
    <property type="entry name" value="HISTIDINE AMMONIA-LYASE"/>
    <property type="match status" value="1"/>
</dbReference>
<dbReference type="Pfam" id="PF00221">
    <property type="entry name" value="Lyase_aromatic"/>
    <property type="match status" value="1"/>
</dbReference>
<dbReference type="SUPFAM" id="SSF48557">
    <property type="entry name" value="L-aspartase-like"/>
    <property type="match status" value="1"/>
</dbReference>
<dbReference type="PROSITE" id="PS00488">
    <property type="entry name" value="PAL_HISTIDASE"/>
    <property type="match status" value="1"/>
</dbReference>
<keyword id="KW-0963">Cytoplasm</keyword>
<keyword id="KW-0369">Histidine metabolism</keyword>
<keyword id="KW-0456">Lyase</keyword>
<keyword id="KW-1185">Reference proteome</keyword>
<evidence type="ECO:0000255" key="1">
    <source>
        <dbReference type="HAMAP-Rule" id="MF_00229"/>
    </source>
</evidence>
<name>HUTH_CLOTE</name>
<proteinExistence type="inferred from homology"/>
<sequence>MKNIKEVILTGNDLTLEELVLVAREGYKVALSEEAKDSVLESRKIIDDIVENEKVVYGVTTGFGEFCNVSISKEDCKTLQENLIRSHACGYGPKFSTDIVRAIMLTRANALSKGYSGIRIGTLNTLIEMLNAGVHPQIHEKGSLGASGDLAPLAHMVLPMLGLGEAEYKGEIMSGKEAMDKAGIPIIELDAKEGLALINGTQVLTATGALAVYDAIELLKVGDIAAALTIEALRGIKDAFDPRLHVIRAHEGQMATARNILKLIEGSTYVTRQGELRVQDAYSLRCVPQIHGASKDTIDFVKEKVEIEINSVTDNPIVTREGDVISGGNFHGEPMAQPFDFLGIGAAEIANVSERRLERLINHQLNDLPAFLAKHGGLNSGFMITQYAAAALVSENKVLAHPASVDSIPSSANQEDLVSMGTIAARKARDIVDNAKRVLATELMAACQAIDFRADKGFELGKGTKEAYKVIREAIDFIEYDTDIQMYKELDKATELITNGKLLEAVEKAVELEH</sequence>
<gene>
    <name evidence="1" type="primary">hutH</name>
    <name type="ordered locus">CTC_02318</name>
</gene>
<reference key="1">
    <citation type="journal article" date="2003" name="Proc. Natl. Acad. Sci. U.S.A.">
        <title>The genome sequence of Clostridium tetani, the causative agent of tetanus disease.</title>
        <authorList>
            <person name="Brueggemann H."/>
            <person name="Baeumer S."/>
            <person name="Fricke W.F."/>
            <person name="Wiezer A."/>
            <person name="Liesegang H."/>
            <person name="Decker I."/>
            <person name="Herzberg C."/>
            <person name="Martinez-Arias R."/>
            <person name="Merkl R."/>
            <person name="Henne A."/>
            <person name="Gottschalk G."/>
        </authorList>
    </citation>
    <scope>NUCLEOTIDE SEQUENCE [LARGE SCALE GENOMIC DNA]</scope>
    <source>
        <strain>Massachusetts / E88</strain>
    </source>
</reference>
<comment type="catalytic activity">
    <reaction evidence="1">
        <text>L-histidine = trans-urocanate + NH4(+)</text>
        <dbReference type="Rhea" id="RHEA:21232"/>
        <dbReference type="ChEBI" id="CHEBI:17771"/>
        <dbReference type="ChEBI" id="CHEBI:28938"/>
        <dbReference type="ChEBI" id="CHEBI:57595"/>
        <dbReference type="EC" id="4.3.1.3"/>
    </reaction>
</comment>
<comment type="pathway">
    <text evidence="1">Amino-acid degradation; L-histidine degradation into L-glutamate; N-formimidoyl-L-glutamate from L-histidine: step 1/3.</text>
</comment>
<comment type="subcellular location">
    <subcellularLocation>
        <location evidence="1">Cytoplasm</location>
    </subcellularLocation>
</comment>
<comment type="PTM">
    <text evidence="1">Contains an active site 4-methylidene-imidazol-5-one (MIO), which is formed autocatalytically by cyclization and dehydration of residues Ala-Ser-Gly.</text>
</comment>
<comment type="similarity">
    <text evidence="1">Belongs to the PAL/histidase family.</text>
</comment>
<protein>
    <recommendedName>
        <fullName evidence="1">Histidine ammonia-lyase</fullName>
        <shortName evidence="1">Histidase</shortName>
        <ecNumber evidence="1">4.3.1.3</ecNumber>
    </recommendedName>
</protein>
<accession>Q891Q1</accession>
<feature type="chain" id="PRO_0000161001" description="Histidine ammonia-lyase">
    <location>
        <begin position="1"/>
        <end position="514"/>
    </location>
</feature>
<feature type="modified residue" description="2,3-didehydroalanine (Ser)" evidence="1">
    <location>
        <position position="147"/>
    </location>
</feature>
<feature type="cross-link" description="5-imidazolinone (Ala-Gly)" evidence="1">
    <location>
        <begin position="146"/>
        <end position="148"/>
    </location>
</feature>